<name>ISPE_NITV2</name>
<evidence type="ECO:0000255" key="1">
    <source>
        <dbReference type="HAMAP-Rule" id="MF_00061"/>
    </source>
</evidence>
<comment type="function">
    <text evidence="1">Catalyzes the phosphorylation of the position 2 hydroxy group of 4-diphosphocytidyl-2C-methyl-D-erythritol.</text>
</comment>
<comment type="catalytic activity">
    <reaction evidence="1">
        <text>4-CDP-2-C-methyl-D-erythritol + ATP = 4-CDP-2-C-methyl-D-erythritol 2-phosphate + ADP + H(+)</text>
        <dbReference type="Rhea" id="RHEA:18437"/>
        <dbReference type="ChEBI" id="CHEBI:15378"/>
        <dbReference type="ChEBI" id="CHEBI:30616"/>
        <dbReference type="ChEBI" id="CHEBI:57823"/>
        <dbReference type="ChEBI" id="CHEBI:57919"/>
        <dbReference type="ChEBI" id="CHEBI:456216"/>
        <dbReference type="EC" id="2.7.1.148"/>
    </reaction>
</comment>
<comment type="pathway">
    <text evidence="1">Isoprenoid biosynthesis; isopentenyl diphosphate biosynthesis via DXP pathway; isopentenyl diphosphate from 1-deoxy-D-xylulose 5-phosphate: step 3/6.</text>
</comment>
<comment type="similarity">
    <text evidence="1">Belongs to the GHMP kinase family. IspE subfamily.</text>
</comment>
<sequence length="286" mass="30819">MNDAVTLRSGCKVNLDLHITSRRDDGYHEIDSLFLPLEEPHDELVVTVGDAPGITVTCAIQGIDPTRNTVTRAYDAYAEASGFRPPLRVELRKGVPHGAGLGGGSANAAAILNHLESIAPHPLGRETLCRLAARIGADVPFFIHAVPCRASGIGEIITPVAWPYKGFTLLLACPQVQVSTAWAYGALDAAEEKQLRVRGCLTTGGVADRNSFSRESWLHNSFEPVVFASHPELRSLKEALLRHGAAAALMSGSGASVFALFRRREDAEAAFEQLKGHGIRVYQHLL</sequence>
<feature type="chain" id="PRO_0000189214" description="4-diphosphocytidyl-2-C-methyl-D-erythritol kinase">
    <location>
        <begin position="1"/>
        <end position="286"/>
    </location>
</feature>
<feature type="active site" evidence="1">
    <location>
        <position position="12"/>
    </location>
</feature>
<feature type="active site" evidence="1">
    <location>
        <position position="138"/>
    </location>
</feature>
<feature type="binding site" evidence="1">
    <location>
        <begin position="96"/>
        <end position="106"/>
    </location>
    <ligand>
        <name>ATP</name>
        <dbReference type="ChEBI" id="CHEBI:30616"/>
    </ligand>
</feature>
<protein>
    <recommendedName>
        <fullName evidence="1">4-diphosphocytidyl-2-C-methyl-D-erythritol kinase</fullName>
        <shortName evidence="1">CMK</shortName>
        <ecNumber evidence="1">2.7.1.148</ecNumber>
    </recommendedName>
    <alternativeName>
        <fullName evidence="1">4-(cytidine-5'-diphospho)-2-C-methyl-D-erythritol kinase</fullName>
    </alternativeName>
</protein>
<accession>Q72BQ8</accession>
<proteinExistence type="inferred from homology"/>
<keyword id="KW-0067">ATP-binding</keyword>
<keyword id="KW-0414">Isoprene biosynthesis</keyword>
<keyword id="KW-0418">Kinase</keyword>
<keyword id="KW-0547">Nucleotide-binding</keyword>
<keyword id="KW-1185">Reference proteome</keyword>
<keyword id="KW-0808">Transferase</keyword>
<dbReference type="EC" id="2.7.1.148" evidence="1"/>
<dbReference type="EMBL" id="AE017285">
    <property type="protein sequence ID" value="AAS96054.1"/>
    <property type="molecule type" value="Genomic_DNA"/>
</dbReference>
<dbReference type="RefSeq" id="WP_010938867.1">
    <property type="nucleotide sequence ID" value="NC_002937.3"/>
</dbReference>
<dbReference type="RefSeq" id="YP_010795.1">
    <property type="nucleotide sequence ID" value="NC_002937.3"/>
</dbReference>
<dbReference type="SMR" id="Q72BQ8"/>
<dbReference type="STRING" id="882.DVU_1576"/>
<dbReference type="PaxDb" id="882-DVU_1576"/>
<dbReference type="EnsemblBacteria" id="AAS96054">
    <property type="protein sequence ID" value="AAS96054"/>
    <property type="gene ID" value="DVU_1576"/>
</dbReference>
<dbReference type="KEGG" id="dvu:DVU_1576"/>
<dbReference type="PATRIC" id="fig|882.5.peg.1451"/>
<dbReference type="eggNOG" id="COG1947">
    <property type="taxonomic scope" value="Bacteria"/>
</dbReference>
<dbReference type="HOGENOM" id="CLU_053057_1_1_7"/>
<dbReference type="OrthoDB" id="9809438at2"/>
<dbReference type="PhylomeDB" id="Q72BQ8"/>
<dbReference type="UniPathway" id="UPA00056">
    <property type="reaction ID" value="UER00094"/>
</dbReference>
<dbReference type="Proteomes" id="UP000002194">
    <property type="component" value="Chromosome"/>
</dbReference>
<dbReference type="GO" id="GO:0050515">
    <property type="term" value="F:4-(cytidine 5'-diphospho)-2-C-methyl-D-erythritol kinase activity"/>
    <property type="evidence" value="ECO:0007669"/>
    <property type="project" value="UniProtKB-UniRule"/>
</dbReference>
<dbReference type="GO" id="GO:0005524">
    <property type="term" value="F:ATP binding"/>
    <property type="evidence" value="ECO:0007669"/>
    <property type="project" value="UniProtKB-UniRule"/>
</dbReference>
<dbReference type="GO" id="GO:0019288">
    <property type="term" value="P:isopentenyl diphosphate biosynthetic process, methylerythritol 4-phosphate pathway"/>
    <property type="evidence" value="ECO:0007669"/>
    <property type="project" value="UniProtKB-UniRule"/>
</dbReference>
<dbReference type="GO" id="GO:0016114">
    <property type="term" value="P:terpenoid biosynthetic process"/>
    <property type="evidence" value="ECO:0007669"/>
    <property type="project" value="InterPro"/>
</dbReference>
<dbReference type="Gene3D" id="3.30.230.10">
    <property type="match status" value="1"/>
</dbReference>
<dbReference type="Gene3D" id="3.30.70.890">
    <property type="entry name" value="GHMP kinase, C-terminal domain"/>
    <property type="match status" value="1"/>
</dbReference>
<dbReference type="HAMAP" id="MF_00061">
    <property type="entry name" value="IspE"/>
    <property type="match status" value="1"/>
</dbReference>
<dbReference type="InterPro" id="IPR013750">
    <property type="entry name" value="GHMP_kinase_C_dom"/>
</dbReference>
<dbReference type="InterPro" id="IPR036554">
    <property type="entry name" value="GHMP_kinase_C_sf"/>
</dbReference>
<dbReference type="InterPro" id="IPR006204">
    <property type="entry name" value="GHMP_kinase_N_dom"/>
</dbReference>
<dbReference type="InterPro" id="IPR004424">
    <property type="entry name" value="IspE"/>
</dbReference>
<dbReference type="InterPro" id="IPR020568">
    <property type="entry name" value="Ribosomal_Su5_D2-typ_SF"/>
</dbReference>
<dbReference type="InterPro" id="IPR014721">
    <property type="entry name" value="Ribsml_uS5_D2-typ_fold_subgr"/>
</dbReference>
<dbReference type="NCBIfam" id="TIGR00154">
    <property type="entry name" value="ispE"/>
    <property type="match status" value="1"/>
</dbReference>
<dbReference type="PANTHER" id="PTHR43527">
    <property type="entry name" value="4-DIPHOSPHOCYTIDYL-2-C-METHYL-D-ERYTHRITOL KINASE, CHLOROPLASTIC"/>
    <property type="match status" value="1"/>
</dbReference>
<dbReference type="PANTHER" id="PTHR43527:SF2">
    <property type="entry name" value="4-DIPHOSPHOCYTIDYL-2-C-METHYL-D-ERYTHRITOL KINASE, CHLOROPLASTIC"/>
    <property type="match status" value="1"/>
</dbReference>
<dbReference type="Pfam" id="PF08544">
    <property type="entry name" value="GHMP_kinases_C"/>
    <property type="match status" value="1"/>
</dbReference>
<dbReference type="Pfam" id="PF00288">
    <property type="entry name" value="GHMP_kinases_N"/>
    <property type="match status" value="1"/>
</dbReference>
<dbReference type="PIRSF" id="PIRSF010376">
    <property type="entry name" value="IspE"/>
    <property type="match status" value="1"/>
</dbReference>
<dbReference type="SUPFAM" id="SSF55060">
    <property type="entry name" value="GHMP Kinase, C-terminal domain"/>
    <property type="match status" value="1"/>
</dbReference>
<dbReference type="SUPFAM" id="SSF54211">
    <property type="entry name" value="Ribosomal protein S5 domain 2-like"/>
    <property type="match status" value="1"/>
</dbReference>
<organism>
    <name type="scientific">Nitratidesulfovibrio vulgaris (strain ATCC 29579 / DSM 644 / CCUG 34227 / NCIMB 8303 / VKM B-1760 / Hildenborough)</name>
    <name type="common">Desulfovibrio vulgaris</name>
    <dbReference type="NCBI Taxonomy" id="882"/>
    <lineage>
        <taxon>Bacteria</taxon>
        <taxon>Pseudomonadati</taxon>
        <taxon>Thermodesulfobacteriota</taxon>
        <taxon>Desulfovibrionia</taxon>
        <taxon>Desulfovibrionales</taxon>
        <taxon>Desulfovibrionaceae</taxon>
        <taxon>Nitratidesulfovibrio</taxon>
    </lineage>
</organism>
<gene>
    <name evidence="1" type="primary">ispE</name>
    <name type="ordered locus">DVU_1576</name>
</gene>
<reference key="1">
    <citation type="journal article" date="2004" name="Nat. Biotechnol.">
        <title>The genome sequence of the anaerobic, sulfate-reducing bacterium Desulfovibrio vulgaris Hildenborough.</title>
        <authorList>
            <person name="Heidelberg J.F."/>
            <person name="Seshadri R."/>
            <person name="Haveman S.A."/>
            <person name="Hemme C.L."/>
            <person name="Paulsen I.T."/>
            <person name="Kolonay J.F."/>
            <person name="Eisen J.A."/>
            <person name="Ward N.L."/>
            <person name="Methe B.A."/>
            <person name="Brinkac L.M."/>
            <person name="Daugherty S.C."/>
            <person name="DeBoy R.T."/>
            <person name="Dodson R.J."/>
            <person name="Durkin A.S."/>
            <person name="Madupu R."/>
            <person name="Nelson W.C."/>
            <person name="Sullivan S.A."/>
            <person name="Fouts D.E."/>
            <person name="Haft D.H."/>
            <person name="Selengut J."/>
            <person name="Peterson J.D."/>
            <person name="Davidsen T.M."/>
            <person name="Zafar N."/>
            <person name="Zhou L."/>
            <person name="Radune D."/>
            <person name="Dimitrov G."/>
            <person name="Hance M."/>
            <person name="Tran K."/>
            <person name="Khouri H.M."/>
            <person name="Gill J."/>
            <person name="Utterback T.R."/>
            <person name="Feldblyum T.V."/>
            <person name="Wall J.D."/>
            <person name="Voordouw G."/>
            <person name="Fraser C.M."/>
        </authorList>
    </citation>
    <scope>NUCLEOTIDE SEQUENCE [LARGE SCALE GENOMIC DNA]</scope>
    <source>
        <strain>ATCC 29579 / DSM 644 / CCUG 34227 / NCIMB 8303 / VKM B-1760 / Hildenborough</strain>
    </source>
</reference>